<organism>
    <name type="scientific">Methanopyrus kandleri (strain AV19 / DSM 6324 / JCM 9639 / NBRC 100938)</name>
    <dbReference type="NCBI Taxonomy" id="190192"/>
    <lineage>
        <taxon>Archaea</taxon>
        <taxon>Methanobacteriati</taxon>
        <taxon>Methanobacteriota</taxon>
        <taxon>Methanomada group</taxon>
        <taxon>Methanopyri</taxon>
        <taxon>Methanopyrales</taxon>
        <taxon>Methanopyraceae</taxon>
        <taxon>Methanopyrus</taxon>
    </lineage>
</organism>
<proteinExistence type="inferred from homology"/>
<protein>
    <recommendedName>
        <fullName>Replication factor C small subunit</fullName>
        <shortName>RFC small subunit</shortName>
    </recommendedName>
    <alternativeName>
        <fullName>Clamp loader small subunit</fullName>
    </alternativeName>
    <component>
        <recommendedName>
            <fullName>Mkn RFC intein</fullName>
        </recommendedName>
    </component>
</protein>
<sequence>MAEHELRVLEIPWVEKYRPKRLDDIVDQEHVVERLKAYVNRGDMPNLLFAGPPGTGKTTAALCLARELFGEHWRDNFLELNASVSADTPILVRRGGEVLRVTFEDLDSWYFGDRGGEYVDVSDLEVLTVDRNFRVTWARVSKLIRHRARKILRVHLEDGTIELTGNHAVMVLDEGGLRAVKASEIEEGSFLLSFVAELDEQPTDGGTVVTSVGSGSRVSDTTYELPVEVRVELLRELADDGVIEASEDVSVDLAWLARISGVESRVTDDGVELVWETRTGDLLPADPVLKLVERLESDLVDDLESWVFDGRVSKEAVRKVLSSVDAKNLRGDARRAYRMLRTLVRSDVHAVKVEDLDVMDYDGYVYDVSVPGNEMFFAGEVPVLLHNSDERGIDVIRTKVKNFARTRPMGGARFKIIFLDEADNLTRDSQQALRRIMEMYSDACRFILAANYSSAIIDPIQSRCVVFKFTKLPESAIKERLRKIAESEGVEITEDALDAIVYVSEGDMRRAINVLQAAAALGREIDEDTVFQIAATARPEEVREMIHHAWNGDFERARELLHELLTRYGMSGEDVVRQVHREIFDMDEIPEEAIPELVNAVGDFEYRLIRGSDERIQLEALLARIHALGNEYSGG</sequence>
<dbReference type="EMBL" id="AE009439">
    <property type="protein sequence ID" value="AAM01223.1"/>
    <property type="molecule type" value="Genomic_DNA"/>
</dbReference>
<dbReference type="RefSeq" id="WP_011018378.1">
    <property type="nucleotide sequence ID" value="NC_003551.1"/>
</dbReference>
<dbReference type="SMR" id="Q8TZC4"/>
<dbReference type="STRING" id="190192.MK0006"/>
<dbReference type="MEROPS" id="N10.007"/>
<dbReference type="PaxDb" id="190192-MK0006"/>
<dbReference type="EnsemblBacteria" id="AAM01223">
    <property type="protein sequence ID" value="AAM01223"/>
    <property type="gene ID" value="MK0006"/>
</dbReference>
<dbReference type="GeneID" id="1477308"/>
<dbReference type="KEGG" id="mka:MK0006"/>
<dbReference type="PATRIC" id="fig|190192.8.peg.6"/>
<dbReference type="HOGENOM" id="CLU_015698_2_0_2"/>
<dbReference type="InParanoid" id="Q8TZC4"/>
<dbReference type="OrthoDB" id="7928at2157"/>
<dbReference type="Proteomes" id="UP000001826">
    <property type="component" value="Chromosome"/>
</dbReference>
<dbReference type="GO" id="GO:0005663">
    <property type="term" value="C:DNA replication factor C complex"/>
    <property type="evidence" value="ECO:0007669"/>
    <property type="project" value="TreeGrafter"/>
</dbReference>
<dbReference type="GO" id="GO:0005524">
    <property type="term" value="F:ATP binding"/>
    <property type="evidence" value="ECO:0007669"/>
    <property type="project" value="UniProtKB-KW"/>
</dbReference>
<dbReference type="GO" id="GO:0016887">
    <property type="term" value="F:ATP hydrolysis activity"/>
    <property type="evidence" value="ECO:0007669"/>
    <property type="project" value="InterPro"/>
</dbReference>
<dbReference type="GO" id="GO:0003677">
    <property type="term" value="F:DNA binding"/>
    <property type="evidence" value="ECO:0007669"/>
    <property type="project" value="InterPro"/>
</dbReference>
<dbReference type="GO" id="GO:0003689">
    <property type="term" value="F:DNA clamp loader activity"/>
    <property type="evidence" value="ECO:0007669"/>
    <property type="project" value="TreeGrafter"/>
</dbReference>
<dbReference type="GO" id="GO:0006281">
    <property type="term" value="P:DNA repair"/>
    <property type="evidence" value="ECO:0007669"/>
    <property type="project" value="TreeGrafter"/>
</dbReference>
<dbReference type="GO" id="GO:0006261">
    <property type="term" value="P:DNA-templated DNA replication"/>
    <property type="evidence" value="ECO:0007669"/>
    <property type="project" value="TreeGrafter"/>
</dbReference>
<dbReference type="GO" id="GO:0016539">
    <property type="term" value="P:intein-mediated protein splicing"/>
    <property type="evidence" value="ECO:0007669"/>
    <property type="project" value="InterPro"/>
</dbReference>
<dbReference type="CDD" id="cd00009">
    <property type="entry name" value="AAA"/>
    <property type="match status" value="2"/>
</dbReference>
<dbReference type="CDD" id="cd00081">
    <property type="entry name" value="Hint"/>
    <property type="match status" value="1"/>
</dbReference>
<dbReference type="CDD" id="cd18140">
    <property type="entry name" value="HLD_clamp_RFC"/>
    <property type="match status" value="1"/>
</dbReference>
<dbReference type="FunFam" id="1.20.272.10:FF:000029">
    <property type="entry name" value="Replication factor C small subunit"/>
    <property type="match status" value="1"/>
</dbReference>
<dbReference type="FunFam" id="1.10.8.60:FF:000012">
    <property type="entry name" value="Replication factor C subunit 4"/>
    <property type="match status" value="1"/>
</dbReference>
<dbReference type="Gene3D" id="1.10.8.60">
    <property type="match status" value="1"/>
</dbReference>
<dbReference type="Gene3D" id="1.20.272.10">
    <property type="match status" value="1"/>
</dbReference>
<dbReference type="Gene3D" id="2.170.16.10">
    <property type="entry name" value="Hedgehog/Intein (Hint) domain"/>
    <property type="match status" value="1"/>
</dbReference>
<dbReference type="Gene3D" id="3.40.50.300">
    <property type="entry name" value="P-loop containing nucleotide triphosphate hydrolases"/>
    <property type="match status" value="2"/>
</dbReference>
<dbReference type="InterPro" id="IPR003593">
    <property type="entry name" value="AAA+_ATPase"/>
</dbReference>
<dbReference type="InterPro" id="IPR003959">
    <property type="entry name" value="ATPase_AAA_core"/>
</dbReference>
<dbReference type="InterPro" id="IPR008921">
    <property type="entry name" value="DNA_pol3_clamp-load_cplx_C"/>
</dbReference>
<dbReference type="InterPro" id="IPR050238">
    <property type="entry name" value="DNA_Rep/Repair_Clamp_Loader"/>
</dbReference>
<dbReference type="InterPro" id="IPR003586">
    <property type="entry name" value="Hint_dom_C"/>
</dbReference>
<dbReference type="InterPro" id="IPR003587">
    <property type="entry name" value="Hint_dom_N"/>
</dbReference>
<dbReference type="InterPro" id="IPR036844">
    <property type="entry name" value="Hint_dom_sf"/>
</dbReference>
<dbReference type="InterPro" id="IPR006142">
    <property type="entry name" value="INTEIN"/>
</dbReference>
<dbReference type="InterPro" id="IPR030934">
    <property type="entry name" value="Intein_C"/>
</dbReference>
<dbReference type="InterPro" id="IPR006141">
    <property type="entry name" value="Intein_N"/>
</dbReference>
<dbReference type="InterPro" id="IPR027417">
    <property type="entry name" value="P-loop_NTPase"/>
</dbReference>
<dbReference type="InterPro" id="IPR013748">
    <property type="entry name" value="Rep_factorC_C"/>
</dbReference>
<dbReference type="InterPro" id="IPR047854">
    <property type="entry name" value="RFC_lid"/>
</dbReference>
<dbReference type="NCBIfam" id="TIGR01443">
    <property type="entry name" value="intein_Cterm"/>
    <property type="match status" value="1"/>
</dbReference>
<dbReference type="NCBIfam" id="TIGR01445">
    <property type="entry name" value="intein_Nterm"/>
    <property type="match status" value="1"/>
</dbReference>
<dbReference type="NCBIfam" id="NF001679">
    <property type="entry name" value="PRK00440.1"/>
    <property type="match status" value="1"/>
</dbReference>
<dbReference type="PANTHER" id="PTHR11669">
    <property type="entry name" value="REPLICATION FACTOR C / DNA POLYMERASE III GAMMA-TAU SUBUNIT"/>
    <property type="match status" value="1"/>
</dbReference>
<dbReference type="PANTHER" id="PTHR11669:SF20">
    <property type="entry name" value="REPLICATION FACTOR C SUBUNIT 4"/>
    <property type="match status" value="1"/>
</dbReference>
<dbReference type="Pfam" id="PF00004">
    <property type="entry name" value="AAA"/>
    <property type="match status" value="1"/>
</dbReference>
<dbReference type="Pfam" id="PF13177">
    <property type="entry name" value="DNA_pol3_delta2"/>
    <property type="match status" value="1"/>
</dbReference>
<dbReference type="Pfam" id="PF14890">
    <property type="entry name" value="Intein_splicing"/>
    <property type="match status" value="1"/>
</dbReference>
<dbReference type="Pfam" id="PF21960">
    <property type="entry name" value="RCF1-5-like_lid"/>
    <property type="match status" value="1"/>
</dbReference>
<dbReference type="Pfam" id="PF08542">
    <property type="entry name" value="Rep_fac_C"/>
    <property type="match status" value="1"/>
</dbReference>
<dbReference type="PRINTS" id="PR00379">
    <property type="entry name" value="INTEIN"/>
</dbReference>
<dbReference type="SMART" id="SM00382">
    <property type="entry name" value="AAA"/>
    <property type="match status" value="1"/>
</dbReference>
<dbReference type="SMART" id="SM00305">
    <property type="entry name" value="HintC"/>
    <property type="match status" value="1"/>
</dbReference>
<dbReference type="SMART" id="SM00306">
    <property type="entry name" value="HintN"/>
    <property type="match status" value="1"/>
</dbReference>
<dbReference type="SUPFAM" id="SSF51294">
    <property type="entry name" value="Hedgehog/intein (Hint) domain"/>
    <property type="match status" value="1"/>
</dbReference>
<dbReference type="SUPFAM" id="SSF52540">
    <property type="entry name" value="P-loop containing nucleoside triphosphate hydrolases"/>
    <property type="match status" value="1"/>
</dbReference>
<dbReference type="SUPFAM" id="SSF48019">
    <property type="entry name" value="post-AAA+ oligomerization domain-like"/>
    <property type="match status" value="1"/>
</dbReference>
<dbReference type="PROSITE" id="PS50818">
    <property type="entry name" value="INTEIN_C_TER"/>
    <property type="match status" value="1"/>
</dbReference>
<dbReference type="PROSITE" id="PS50817">
    <property type="entry name" value="INTEIN_N_TER"/>
    <property type="match status" value="1"/>
</dbReference>
<gene>
    <name type="primary">rfcS</name>
    <name type="ordered locus">MK0006</name>
</gene>
<evidence type="ECO:0000250" key="1"/>
<evidence type="ECO:0000255" key="2"/>
<evidence type="ECO:0000305" key="3"/>
<keyword id="KW-0067">ATP-binding</keyword>
<keyword id="KW-0068">Autocatalytic cleavage</keyword>
<keyword id="KW-0235">DNA replication</keyword>
<keyword id="KW-0547">Nucleotide-binding</keyword>
<keyword id="KW-0651">Protein splicing</keyword>
<keyword id="KW-1185">Reference proteome</keyword>
<name>RFCS_METKA</name>
<comment type="function">
    <text evidence="1">Part of the RFC clamp loader complex which loads the PCNA sliding clamp onto DNA.</text>
</comment>
<comment type="subunit">
    <text evidence="1">Heteromultimer composed of small subunits (RfcS) and large subunits (RfcL).</text>
</comment>
<comment type="PTM">
    <text evidence="3">This protein undergoes a protein self splicing that involves a post-translational excision of the intervening region (intein) followed by peptide ligation.</text>
</comment>
<comment type="similarity">
    <text evidence="3">Belongs to the activator 1 small subunits family. RfcS subfamily.</text>
</comment>
<feature type="chain" id="PRO_0000030368" description="Replication factor C small subunit, 1st part" evidence="2">
    <location>
        <begin position="1"/>
        <end position="82"/>
    </location>
</feature>
<feature type="chain" id="PRO_0000030369" description="Mkn RFC intein" evidence="2">
    <location>
        <begin position="83"/>
        <end position="387"/>
    </location>
</feature>
<feature type="chain" id="PRO_0000030370" description="Replication factor C small subunit, 2nd part" evidence="2">
    <location>
        <begin position="388"/>
        <end position="635"/>
    </location>
</feature>
<feature type="binding site" evidence="2">
    <location>
        <begin position="51"/>
        <end position="58"/>
    </location>
    <ligand>
        <name>ATP</name>
        <dbReference type="ChEBI" id="CHEBI:30616"/>
    </ligand>
</feature>
<reference key="1">
    <citation type="journal article" date="2002" name="Proc. Natl. Acad. Sci. U.S.A.">
        <title>The complete genome of hyperthermophile Methanopyrus kandleri AV19 and monophyly of archaeal methanogens.</title>
        <authorList>
            <person name="Slesarev A.I."/>
            <person name="Mezhevaya K.V."/>
            <person name="Makarova K.S."/>
            <person name="Polushin N.N."/>
            <person name="Shcherbinina O.V."/>
            <person name="Shakhova V.V."/>
            <person name="Belova G.I."/>
            <person name="Aravind L."/>
            <person name="Natale D.A."/>
            <person name="Rogozin I.B."/>
            <person name="Tatusov R.L."/>
            <person name="Wolf Y.I."/>
            <person name="Stetter K.O."/>
            <person name="Malykh A.G."/>
            <person name="Koonin E.V."/>
            <person name="Kozyavkin S.A."/>
        </authorList>
    </citation>
    <scope>NUCLEOTIDE SEQUENCE [LARGE SCALE GENOMIC DNA]</scope>
    <source>
        <strain>AV19 / DSM 6324 / JCM 9639 / NBRC 100938</strain>
    </source>
</reference>
<accession>Q8TZC4</accession>